<reference key="1">
    <citation type="journal article" date="2009" name="Genome Res.">
        <title>Comparative genomics of protoploid Saccharomycetaceae.</title>
        <authorList>
            <consortium name="The Genolevures Consortium"/>
            <person name="Souciet J.-L."/>
            <person name="Dujon B."/>
            <person name="Gaillardin C."/>
            <person name="Johnston M."/>
            <person name="Baret P.V."/>
            <person name="Cliften P."/>
            <person name="Sherman D.J."/>
            <person name="Weissenbach J."/>
            <person name="Westhof E."/>
            <person name="Wincker P."/>
            <person name="Jubin C."/>
            <person name="Poulain J."/>
            <person name="Barbe V."/>
            <person name="Segurens B."/>
            <person name="Artiguenave F."/>
            <person name="Anthouard V."/>
            <person name="Vacherie B."/>
            <person name="Val M.-E."/>
            <person name="Fulton R.S."/>
            <person name="Minx P."/>
            <person name="Wilson R."/>
            <person name="Durrens P."/>
            <person name="Jean G."/>
            <person name="Marck C."/>
            <person name="Martin T."/>
            <person name="Nikolski M."/>
            <person name="Rolland T."/>
            <person name="Seret M.-L."/>
            <person name="Casaregola S."/>
            <person name="Despons L."/>
            <person name="Fairhead C."/>
            <person name="Fischer G."/>
            <person name="Lafontaine I."/>
            <person name="Leh V."/>
            <person name="Lemaire M."/>
            <person name="de Montigny J."/>
            <person name="Neuveglise C."/>
            <person name="Thierry A."/>
            <person name="Blanc-Lenfle I."/>
            <person name="Bleykasten C."/>
            <person name="Diffels J."/>
            <person name="Fritsch E."/>
            <person name="Frangeul L."/>
            <person name="Goeffon A."/>
            <person name="Jauniaux N."/>
            <person name="Kachouri-Lafond R."/>
            <person name="Payen C."/>
            <person name="Potier S."/>
            <person name="Pribylova L."/>
            <person name="Ozanne C."/>
            <person name="Richard G.-F."/>
            <person name="Sacerdot C."/>
            <person name="Straub M.-L."/>
            <person name="Talla E."/>
        </authorList>
    </citation>
    <scope>NUCLEOTIDE SEQUENCE [LARGE SCALE GENOMIC DNA]</scope>
    <source>
        <strain>ATCC 56472 / CBS 6340 / NRRL Y-8284</strain>
    </source>
</reference>
<protein>
    <recommendedName>
        <fullName>U3 small nucleolar RNA-associated protein 25</fullName>
        <shortName>U3 snoRNA-associated protein 25</shortName>
    </recommendedName>
    <alternativeName>
        <fullName>U three protein 25</fullName>
    </alternativeName>
</protein>
<accession>C5DMP2</accession>
<sequence length="747" mass="85710">MSSLKRSSSAIKGSNEYRSSKSGRKQLRTIRKASGPRRGLAEESANEENNGSETEAEDKLAAPELNEPAQDQRAGGEAYAALLTLLKAEHGGPARRKTKTDDKKTSADPTSNVKDEEESESRDNEDEEEDEDEEAAIENALMDEHTSGDEDDEGDDGSHQDDINGVTREGGDATELAAGFEEEDKPDTLEIHFNSVSEKDTNALDAAFKAKEVRYRSCKLHVDKNQEFIYSRPTLVNEPASAVSAPDGSQSLNSYFIKQRLKIQNDLLDSQDKLTPLQKQIVDPMFQYQDLLYEYEDYDKETEYRDLYALHVLNHIYKTRDRILKNNQRLQENPDQELLDQGFTRPKVLIVAPTRDAAYDILSKIIQKSGLDQVDKKAKFKDQFFQEALPPSYKPKSFQQLFKGNTNDFFVLGAKFTRKTIKLYSNFYQSDIIICSPLGIQLILENTDKKKRQDDFLSSIELLVVDQLHSIEFQNMLHLTSIFEHINKIPQQQHDADFSRIKMWYINDQAKLFRQTLIFTKFSSPFANSLINGKCRNYAGRWKNHRVIFPENSSLGQLGMRTRLIFQRFDLVGKSVSEEPDSRFKHFCSVIVPNIVKSTGYEDGILLYIPDYTDFVRVRNYLREKTTILFGDINEYSEQRQLTSNRAMFQQGRVKVLLYTERLHHFRRYEIKGVKTVIFYKPPTNPEFFEEVARYLGKSAFLGLADLNISVVRCLFSKLDGLSLERIVGTERAAVLTHGPNETYEFK</sequence>
<proteinExistence type="inferred from homology"/>
<name>UTP25_LACTC</name>
<evidence type="ECO:0000250" key="1"/>
<evidence type="ECO:0000256" key="2">
    <source>
        <dbReference type="SAM" id="MobiDB-lite"/>
    </source>
</evidence>
<evidence type="ECO:0000305" key="3"/>
<comment type="function">
    <text evidence="1">DEAD-box RNA helicase-like protein required for pre-18S rRNA processing, specifically at sites A0, A1, and A2.</text>
</comment>
<comment type="subunit">
    <text evidence="1">Component of the ribosomal small subunit (SSU) processome composed of at least 40 protein subunits and snoRNA U3.</text>
</comment>
<comment type="subcellular location">
    <subcellularLocation>
        <location evidence="1">Nucleus</location>
        <location evidence="1">Nucleolus</location>
    </subcellularLocation>
</comment>
<comment type="similarity">
    <text evidence="3">Belongs to the UTP25 family.</text>
</comment>
<gene>
    <name type="primary">UTP25</name>
    <name type="ordered locus">KLTH0G10494g</name>
</gene>
<dbReference type="EMBL" id="CU928171">
    <property type="protein sequence ID" value="CAR25053.1"/>
    <property type="molecule type" value="Genomic_DNA"/>
</dbReference>
<dbReference type="RefSeq" id="XP_002555490.1">
    <property type="nucleotide sequence ID" value="XM_002555444.1"/>
</dbReference>
<dbReference type="FunCoup" id="C5DMP2">
    <property type="interactions" value="1333"/>
</dbReference>
<dbReference type="STRING" id="559295.C5DMP2"/>
<dbReference type="GeneID" id="8293768"/>
<dbReference type="KEGG" id="lth:KLTH0G10494g"/>
<dbReference type="eggNOG" id="KOG2340">
    <property type="taxonomic scope" value="Eukaryota"/>
</dbReference>
<dbReference type="HOGENOM" id="CLU_018705_0_1_1"/>
<dbReference type="InParanoid" id="C5DMP2"/>
<dbReference type="OMA" id="PSIFGYH"/>
<dbReference type="OrthoDB" id="10264378at2759"/>
<dbReference type="Proteomes" id="UP000002036">
    <property type="component" value="Chromosome G"/>
</dbReference>
<dbReference type="GO" id="GO:0005730">
    <property type="term" value="C:nucleolus"/>
    <property type="evidence" value="ECO:0007669"/>
    <property type="project" value="UniProtKB-SubCell"/>
</dbReference>
<dbReference type="GO" id="GO:0032040">
    <property type="term" value="C:small-subunit processome"/>
    <property type="evidence" value="ECO:0007669"/>
    <property type="project" value="TreeGrafter"/>
</dbReference>
<dbReference type="GO" id="GO:0019843">
    <property type="term" value="F:rRNA binding"/>
    <property type="evidence" value="ECO:0007669"/>
    <property type="project" value="TreeGrafter"/>
</dbReference>
<dbReference type="GO" id="GO:0034511">
    <property type="term" value="F:U3 snoRNA binding"/>
    <property type="evidence" value="ECO:0007669"/>
    <property type="project" value="InterPro"/>
</dbReference>
<dbReference type="GO" id="GO:0000462">
    <property type="term" value="P:maturation of SSU-rRNA from tricistronic rRNA transcript (SSU-rRNA, 5.8S rRNA, LSU-rRNA)"/>
    <property type="evidence" value="ECO:0007669"/>
    <property type="project" value="TreeGrafter"/>
</dbReference>
<dbReference type="Gene3D" id="3.40.50.300">
    <property type="entry name" value="P-loop containing nucleotide triphosphate hydrolases"/>
    <property type="match status" value="1"/>
</dbReference>
<dbReference type="InterPro" id="IPR027417">
    <property type="entry name" value="P-loop_NTPase"/>
</dbReference>
<dbReference type="InterPro" id="IPR010678">
    <property type="entry name" value="UTP25"/>
</dbReference>
<dbReference type="InterPro" id="IPR053939">
    <property type="entry name" value="UTP25_C"/>
</dbReference>
<dbReference type="InterPro" id="IPR053940">
    <property type="entry name" value="UTP25_NTPase-like"/>
</dbReference>
<dbReference type="PANTHER" id="PTHR12933">
    <property type="entry name" value="ORF PROTEIN-RELATED"/>
    <property type="match status" value="1"/>
</dbReference>
<dbReference type="PANTHER" id="PTHR12933:SF0">
    <property type="entry name" value="U3 SMALL NUCLEOLAR RNA-ASSOCIATED PROTEIN 25 HOMOLOG"/>
    <property type="match status" value="1"/>
</dbReference>
<dbReference type="Pfam" id="PF06862">
    <property type="entry name" value="Utp25_C"/>
    <property type="match status" value="1"/>
</dbReference>
<dbReference type="Pfam" id="PF22916">
    <property type="entry name" value="UTP25_NTPase-like"/>
    <property type="match status" value="1"/>
</dbReference>
<keyword id="KW-0539">Nucleus</keyword>
<keyword id="KW-1185">Reference proteome</keyword>
<keyword id="KW-0687">Ribonucleoprotein</keyword>
<keyword id="KW-0690">Ribosome biogenesis</keyword>
<keyword id="KW-0698">rRNA processing</keyword>
<feature type="chain" id="PRO_0000408119" description="U3 small nucleolar RNA-associated protein 25">
    <location>
        <begin position="1"/>
        <end position="747"/>
    </location>
</feature>
<feature type="region of interest" description="Disordered" evidence="2">
    <location>
        <begin position="1"/>
        <end position="170"/>
    </location>
</feature>
<feature type="compositionally biased region" description="Polar residues" evidence="2">
    <location>
        <begin position="1"/>
        <end position="12"/>
    </location>
</feature>
<feature type="compositionally biased region" description="Basic residues" evidence="2">
    <location>
        <begin position="21"/>
        <end position="35"/>
    </location>
</feature>
<feature type="compositionally biased region" description="Acidic residues" evidence="2">
    <location>
        <begin position="115"/>
        <end position="136"/>
    </location>
</feature>
<organism>
    <name type="scientific">Lachancea thermotolerans (strain ATCC 56472 / CBS 6340 / NRRL Y-8284)</name>
    <name type="common">Yeast</name>
    <name type="synonym">Kluyveromyces thermotolerans</name>
    <dbReference type="NCBI Taxonomy" id="559295"/>
    <lineage>
        <taxon>Eukaryota</taxon>
        <taxon>Fungi</taxon>
        <taxon>Dikarya</taxon>
        <taxon>Ascomycota</taxon>
        <taxon>Saccharomycotina</taxon>
        <taxon>Saccharomycetes</taxon>
        <taxon>Saccharomycetales</taxon>
        <taxon>Saccharomycetaceae</taxon>
        <taxon>Lachancea</taxon>
    </lineage>
</organism>